<dbReference type="EMBL" id="AC121919">
    <property type="status" value="NOT_ANNOTATED_CDS"/>
    <property type="molecule type" value="Genomic_DNA"/>
</dbReference>
<dbReference type="EMBL" id="AC133179">
    <property type="status" value="NOT_ANNOTATED_CDS"/>
    <property type="molecule type" value="Genomic_DNA"/>
</dbReference>
<dbReference type="EMBL" id="AK076605">
    <property type="protein sequence ID" value="BAC36411.1"/>
    <property type="molecule type" value="mRNA"/>
</dbReference>
<dbReference type="EMBL" id="AK132980">
    <property type="protein sequence ID" value="BAE21453.1"/>
    <property type="molecule type" value="mRNA"/>
</dbReference>
<dbReference type="SMR" id="Q3V0Q1"/>
<dbReference type="FunCoup" id="Q3V0Q1">
    <property type="interactions" value="13"/>
</dbReference>
<dbReference type="STRING" id="10090.ENSMUSP00000022433"/>
<dbReference type="GlyGen" id="Q3V0Q1">
    <property type="glycosylation" value="5 sites, 1 O-linked glycan (2 sites)"/>
</dbReference>
<dbReference type="iPTMnet" id="Q3V0Q1"/>
<dbReference type="PhosphoSitePlus" id="Q3V0Q1"/>
<dbReference type="SwissPalm" id="Q3V0Q1"/>
<dbReference type="jPOST" id="Q3V0Q1"/>
<dbReference type="PaxDb" id="10090-ENSMUSP00000022433"/>
<dbReference type="ProteomicsDB" id="277419"/>
<dbReference type="AGR" id="MGI:107720"/>
<dbReference type="MGI" id="MGI:107720">
    <property type="gene designation" value="Dnah12"/>
</dbReference>
<dbReference type="eggNOG" id="KOG3595">
    <property type="taxonomic scope" value="Eukaryota"/>
</dbReference>
<dbReference type="InParanoid" id="Q3V0Q1"/>
<dbReference type="PhylomeDB" id="Q3V0Q1"/>
<dbReference type="UniPathway" id="UPA00143"/>
<dbReference type="ChiTaRS" id="Dnah12">
    <property type="organism name" value="mouse"/>
</dbReference>
<dbReference type="PRO" id="PR:Q3V0Q1"/>
<dbReference type="Proteomes" id="UP000000589">
    <property type="component" value="Unplaced"/>
</dbReference>
<dbReference type="RNAct" id="Q3V0Q1">
    <property type="molecule type" value="protein"/>
</dbReference>
<dbReference type="GO" id="GO:0036156">
    <property type="term" value="C:inner dynein arm"/>
    <property type="evidence" value="ECO:0000255"/>
    <property type="project" value="MGI"/>
</dbReference>
<dbReference type="GO" id="GO:0005874">
    <property type="term" value="C:microtubule"/>
    <property type="evidence" value="ECO:0007669"/>
    <property type="project" value="UniProtKB-KW"/>
</dbReference>
<dbReference type="GO" id="GO:0005524">
    <property type="term" value="F:ATP binding"/>
    <property type="evidence" value="ECO:0007669"/>
    <property type="project" value="UniProtKB-KW"/>
</dbReference>
<dbReference type="GO" id="GO:0016887">
    <property type="term" value="F:ATP hydrolysis activity"/>
    <property type="evidence" value="ECO:0007669"/>
    <property type="project" value="InterPro"/>
</dbReference>
<dbReference type="GO" id="GO:0045505">
    <property type="term" value="F:dynein intermediate chain binding"/>
    <property type="evidence" value="ECO:0007669"/>
    <property type="project" value="InterPro"/>
</dbReference>
<dbReference type="GO" id="GO:0051959">
    <property type="term" value="F:dynein light intermediate chain binding"/>
    <property type="evidence" value="ECO:0007669"/>
    <property type="project" value="InterPro"/>
</dbReference>
<dbReference type="GO" id="GO:0008569">
    <property type="term" value="F:minus-end-directed microtubule motor activity"/>
    <property type="evidence" value="ECO:0007669"/>
    <property type="project" value="InterPro"/>
</dbReference>
<dbReference type="GO" id="GO:0007018">
    <property type="term" value="P:microtubule-based movement"/>
    <property type="evidence" value="ECO:0007669"/>
    <property type="project" value="InterPro"/>
</dbReference>
<dbReference type="GO" id="GO:0016567">
    <property type="term" value="P:protein ubiquitination"/>
    <property type="evidence" value="ECO:0007669"/>
    <property type="project" value="UniProtKB-UniPathway"/>
</dbReference>
<dbReference type="CDD" id="cd00009">
    <property type="entry name" value="AAA"/>
    <property type="match status" value="1"/>
</dbReference>
<dbReference type="FunFam" id="1.20.920.30:FF:000002">
    <property type="entry name" value="Dynein axonemal heavy chain 3"/>
    <property type="match status" value="1"/>
</dbReference>
<dbReference type="FunFam" id="1.10.8.710:FF:000004">
    <property type="entry name" value="Dynein axonemal heavy chain 6"/>
    <property type="match status" value="1"/>
</dbReference>
<dbReference type="FunFam" id="1.20.140.100:FF:000004">
    <property type="entry name" value="Dynein axonemal heavy chain 6"/>
    <property type="match status" value="1"/>
</dbReference>
<dbReference type="FunFam" id="1.10.472.130:FF:000005">
    <property type="entry name" value="Dynein axonemal heavy chain 7"/>
    <property type="match status" value="1"/>
</dbReference>
<dbReference type="FunFam" id="3.20.180.20:FF:000003">
    <property type="entry name" value="Dynein heavy chain 12, axonemal"/>
    <property type="match status" value="1"/>
</dbReference>
<dbReference type="FunFam" id="3.40.50.300:FF:001112">
    <property type="entry name" value="Dynein heavy chain 12, axonemal"/>
    <property type="match status" value="1"/>
</dbReference>
<dbReference type="FunFam" id="1.10.287.2620:FF:000002">
    <property type="entry name" value="Dynein heavy chain 2, axonemal"/>
    <property type="match status" value="1"/>
</dbReference>
<dbReference type="FunFam" id="3.40.50.300:FF:000044">
    <property type="entry name" value="Dynein heavy chain 5, axonemal"/>
    <property type="match status" value="1"/>
</dbReference>
<dbReference type="FunFam" id="1.10.8.720:FF:000001">
    <property type="entry name" value="dynein heavy chain 7, axonemal"/>
    <property type="match status" value="1"/>
</dbReference>
<dbReference type="FunFam" id="1.20.1270.280:FF:000001">
    <property type="entry name" value="dynein heavy chain 7, axonemal"/>
    <property type="match status" value="1"/>
</dbReference>
<dbReference type="FunFam" id="3.10.490.20:FF:000001">
    <property type="entry name" value="dynein heavy chain 7, axonemal"/>
    <property type="match status" value="1"/>
</dbReference>
<dbReference type="FunFam" id="1.20.58.1120:FF:000005">
    <property type="entry name" value="Dynein, axonemal, heavy chain 12"/>
    <property type="match status" value="1"/>
</dbReference>
<dbReference type="FunFam" id="3.40.50.300:FF:000362">
    <property type="entry name" value="Dynein, axonemal, heavy chain 6"/>
    <property type="match status" value="1"/>
</dbReference>
<dbReference type="FunFam" id="3.40.50.300:FF:005585">
    <property type="entry name" value="Predicted protein"/>
    <property type="match status" value="1"/>
</dbReference>
<dbReference type="Gene3D" id="1.10.287.2620">
    <property type="match status" value="1"/>
</dbReference>
<dbReference type="Gene3D" id="1.10.472.130">
    <property type="match status" value="1"/>
</dbReference>
<dbReference type="Gene3D" id="1.10.8.710">
    <property type="match status" value="1"/>
</dbReference>
<dbReference type="Gene3D" id="1.20.1270.280">
    <property type="match status" value="1"/>
</dbReference>
<dbReference type="Gene3D" id="1.20.58.1120">
    <property type="match status" value="1"/>
</dbReference>
<dbReference type="Gene3D" id="1.20.920.30">
    <property type="match status" value="1"/>
</dbReference>
<dbReference type="Gene3D" id="3.10.490.20">
    <property type="match status" value="1"/>
</dbReference>
<dbReference type="Gene3D" id="1.20.140.100">
    <property type="entry name" value="Dynein heavy chain, N-terminal domain 2"/>
    <property type="match status" value="1"/>
</dbReference>
<dbReference type="Gene3D" id="3.20.180.20">
    <property type="entry name" value="Dynein heavy chain, N-terminal domain 2"/>
    <property type="match status" value="1"/>
</dbReference>
<dbReference type="Gene3D" id="3.40.50.300">
    <property type="entry name" value="P-loop containing nucleotide triphosphate hydrolases"/>
    <property type="match status" value="4"/>
</dbReference>
<dbReference type="Gene3D" id="1.10.8.720">
    <property type="entry name" value="Region D6 of dynein motor"/>
    <property type="match status" value="1"/>
</dbReference>
<dbReference type="InterPro" id="IPR003593">
    <property type="entry name" value="AAA+_ATPase"/>
</dbReference>
<dbReference type="InterPro" id="IPR035699">
    <property type="entry name" value="AAA_6"/>
</dbReference>
<dbReference type="InterPro" id="IPR041658">
    <property type="entry name" value="AAA_lid_11"/>
</dbReference>
<dbReference type="InterPro" id="IPR042219">
    <property type="entry name" value="AAA_lid_11_sf"/>
</dbReference>
<dbReference type="InterPro" id="IPR026983">
    <property type="entry name" value="DHC"/>
</dbReference>
<dbReference type="InterPro" id="IPR041589">
    <property type="entry name" value="DNAH3_AAA_lid_1"/>
</dbReference>
<dbReference type="InterPro" id="IPR042222">
    <property type="entry name" value="Dynein_2_N"/>
</dbReference>
<dbReference type="InterPro" id="IPR043157">
    <property type="entry name" value="Dynein_AAA1S"/>
</dbReference>
<dbReference type="InterPro" id="IPR041466">
    <property type="entry name" value="Dynein_AAA5_ext"/>
</dbReference>
<dbReference type="InterPro" id="IPR041228">
    <property type="entry name" value="Dynein_C"/>
</dbReference>
<dbReference type="InterPro" id="IPR043160">
    <property type="entry name" value="Dynein_C_barrel"/>
</dbReference>
<dbReference type="InterPro" id="IPR024317">
    <property type="entry name" value="Dynein_heavy_chain_D4_dom"/>
</dbReference>
<dbReference type="InterPro" id="IPR004273">
    <property type="entry name" value="Dynein_heavy_D6_P-loop"/>
</dbReference>
<dbReference type="InterPro" id="IPR013602">
    <property type="entry name" value="Dynein_heavy_linker"/>
</dbReference>
<dbReference type="InterPro" id="IPR042228">
    <property type="entry name" value="Dynein_linker_3"/>
</dbReference>
<dbReference type="InterPro" id="IPR027417">
    <property type="entry name" value="P-loop_NTPase"/>
</dbReference>
<dbReference type="PANTHER" id="PTHR22878:SF70">
    <property type="entry name" value="DYNEIN HEAVY CHAIN 2, AXONEMAL"/>
    <property type="match status" value="1"/>
</dbReference>
<dbReference type="PANTHER" id="PTHR22878">
    <property type="entry name" value="DYNEIN HEAVY CHAIN 6, AXONEMAL-LIKE-RELATED"/>
    <property type="match status" value="1"/>
</dbReference>
<dbReference type="Pfam" id="PF12774">
    <property type="entry name" value="AAA_6"/>
    <property type="match status" value="1"/>
</dbReference>
<dbReference type="Pfam" id="PF12775">
    <property type="entry name" value="AAA_7"/>
    <property type="match status" value="1"/>
</dbReference>
<dbReference type="Pfam" id="PF12780">
    <property type="entry name" value="AAA_8"/>
    <property type="match status" value="1"/>
</dbReference>
<dbReference type="Pfam" id="PF17857">
    <property type="entry name" value="AAA_lid_1"/>
    <property type="match status" value="1"/>
</dbReference>
<dbReference type="Pfam" id="PF18198">
    <property type="entry name" value="AAA_lid_11"/>
    <property type="match status" value="1"/>
</dbReference>
<dbReference type="Pfam" id="PF08393">
    <property type="entry name" value="DHC_N2"/>
    <property type="match status" value="1"/>
</dbReference>
<dbReference type="Pfam" id="PF17852">
    <property type="entry name" value="Dynein_AAA_lid"/>
    <property type="match status" value="1"/>
</dbReference>
<dbReference type="Pfam" id="PF18199">
    <property type="entry name" value="Dynein_C"/>
    <property type="match status" value="1"/>
</dbReference>
<dbReference type="Pfam" id="PF03028">
    <property type="entry name" value="Dynein_heavy"/>
    <property type="match status" value="1"/>
</dbReference>
<dbReference type="SMART" id="SM00382">
    <property type="entry name" value="AAA"/>
    <property type="match status" value="2"/>
</dbReference>
<dbReference type="SUPFAM" id="SSF52540">
    <property type="entry name" value="P-loop containing nucleoside triphosphate hydrolases"/>
    <property type="match status" value="4"/>
</dbReference>
<sequence length="3086" mass="356231">MSDPNKTAIAAEKEALNLKLPPIVQPPKNIGVDTPKQSELLKYRRSKEQQKKINQLVISGAKKSLDKTLDKRIPPLPEPDFPPTMTSEIKKRGLNYIFMKQCVENSPIVPIQSQWLDNMLMLVPEHLKEGEKSEELLGSLIDEVSMDYEKSMKRYLVQSVLVKPPVKWLEDEGGPLPESPEGLDYSNPWHSNFVQARSQILANLHIVHPTMKMLLELGYTAFAKIILLDLTGIRARGPIDCEALRNDLSIQARKSEEKIMNTWYPKVINLFTKKEALEGIKTEKLDSFYNCVSILMSNQLKDLLWRTVEEFIKLFDPRYLNRLPIFKMELTFDDDKMEFYPTFQDLEDVVLGLIERISETLQTVQTVPSWLSGTSSPVNLDTEIPEHVLQWALCTLRTAIQHNLEGAKAHHKTYVTKYNWLLDGTATKMIQRFQAENHTFDEYTEFIEKFFNLASEIMLLPQWAHYPMVRLDCEDLKIGLTNKARAFANILLNDIASKHRKENESICSEFEAIRDHALRVPETTEEMMELIAFVERARTVGILDLALRIQESKRQMSYFLDALLMSQEDLNLNATVLLWPTKITPVFDENDELIENAKHAKENELIAKREKLILEIEKESRRMEEFTEFAELDRMHQYVADVRQLQKRIQESEEAVQFINKEEELFKWELTKYPELEKLKVTIEPYQKFFNFVLKWQRTEKRWMDGGFLDLNGESMEADIDDFSREVFRTLKFFHAKQKKELQERRKAARKRSLMEEKPEEEPKENPTITMMRARHWKQMSEIVGYDLTPDSGTTLRKVLKLNLSPYLESFEVISAGASKEFSLERSMNAMIATWDDISFHISLYRDTGIGILSSVDEIQAILDDQIIKTQTMRGSPFIKPFENEIKAWEDRLIRIQETIDEWLKVQAQWLYLEPIFCSEDIMQQMPEEGRQFQTVDRHWKDIMKFCAKDPKVLAATSLTGLLEKLQNCNDLLEKIMKGLNAYLEKKRLFFPRFFFLSNDEMLEILSETKDPLRVQPHLKKCFEGIAKLEFLANLDIKAMYSSEGERVELIALISTTAARGAVEKWLIQVEDLMLRSIRDVIAASRLAYPESARKDWVREWPGQVVLCVSQMFWTSETQEIISGGTEGLKKYYKELQYQLNDIVELVRGKLSKQTRITLGALVTIDVHARDVVMDMIEMGVSHDTDFQWLAQLRYYWEYENARVRIINCNVKYAYEYLGNSPRLVITPLTDRCYRTLIGAFYLNLGGAPEGPAGTGKTETTKDLAKALAVQCVVFNCSDGLDYLAMGKFFKGLASSGAWACFDEFNRIELEVLSVVAQQILCIQRAIQQKLEAFVFEGTELRLNPNCFVAITMNPGYAGRSELPDNLKVLFRTVAMMVPNYALIAEISLYSYGFLNAKPLSVKIVMTYRLCSEQLSSQFHYDYGMRAVKAVLVAAGNLKLKYPNENEDILLLRSIKDVNEPKFLSHDIPLFNGITSDLFPGIKLPEADYKEFLECAHETCQTHNLQPVKFFLEKIIQTYEMMIVRHGFMLVGEPFAAKTEVLHVLADTLTLMNERNYGDEEKVMYRTVNPKSITMGQLFGQFDPVSHEWTDGIVANTFREFALAESPDRKWVVFDGPIDTLWIESMNTVLDDNKKLCLMSGEIIQMSPQMSLIFETMDLSQASPATVSRCGMIYLEPSQLGWEPLVASWLNSLKEPLSELEHQNLLKELFDWLVPPSLVFRRKKCKFLSLHDLSKYFKQVLIYYILVVSPKFSLKSNHYKIFFHQQASFIFSLIWSIGASCDTDGRLAFDAFLRTAVSGRNEEAPMPVSISKWECPFDEKGLVYDYMYELRNRGRWIHWNELIKSSDLEDKRAKIQDIIVPTMDTIRYTFLMDLSITSAKPLLFVGPTGTGKSVYVKDKLMNHLEKEKYFPFYVNFSARTSANQVQNIIMARLDKRRKGVFGPPMGKKCVIFIDDMNMPSLEKYGAQPPIELLRQFFDCGHWYDLKDTSKITLIDIELIAAMGPPGGGRNAVTPRFIRHFNICTINTFSDETMVRIFSSIMAFYLRTHAFSPEYFVLGNQIVSGTMEVYKQSMGNLLPTPAKSHYTFNLRDFSRVIRGCLLIEKDAIESKHTMIRLFVHEVLRVFYDRLINDEDRNWLFLLIKNVIKDHFKESFDTVFHHLRNGNAPVTEEDLRNLMFGDYMNPDLEGDDRVYIEIPDIHHFNEVVDQCLDEYNQTHKRRMNLVVFRYVLEHLSRICRILKQSGGNALLIGLGGSGRQSLTKLATSMAKMQIFQPEISKSYGMNEWREDIKGFLLLIIIWAVVESLSKILEKRLRYLNDHFTYNLYCNICRSLFEKDKLLFSFLLCANLLLAKKEIEYQELMFLLTGGVSLKSAEKNPDPDWLQDKSWEEICRASELPVFHGLREHFCNYIYLWEEIYDSKEPHNMKFPEPMDKTLNELQKIIILRCLRPDKITPAITNYVTDKLGKKFVEPPPFDLTKSYLDSNCTIPLVFVLSPGADPMASLLKFANDKSMSGNKFQAISLGQGQGPVASKMITAAIEEGTWVCLQNCHLAVSWMPTLEKICEDFSPETCNPTFRLWLTSYPSPKFPVTILQNGVKMTNEPPTGLRLNLLQSYLSDPISDTQFFKGCPGKELAWEKLLFGVCFFHALVQERKKFGPLGWNIPYGFNESDLRISVRQLQLFINEYDTIPFEAISYLTGECNYGGRVTDDWDRRLLLTMLADFYNSFIIENPHYKFSPSGNYYAPPKGTYDDYIEFIKKLPFTQEPEIFGLHENVDISKDLQQTKVLFESLLLTQGGAKQTGSSGSTDQVLLEITEDILTQLPNDFDIEAALKNYPVRYEESMNTVLVQEMERFNNLIRTIRNTLRDLKKAIKGLVVMDSALEALSGSLLIGKVPEMWAKRSYPSLKPLGSYITDFLARLKFLEDWFSSGKPSVFWISGFFFTQAFLTGAMQNFARKYTIPIDLLGYEFEVIPFDYSDTPPEDGVYIHGLYLDGARWDRFSGLLAEQYPKLLFDLMPIIWIKPNLKIEIVKIEAYICPLYKTSERKGTLSTTGHSTNFVIAMLLKTDQPTQHWIKRGVALLCQLDN</sequence>
<protein>
    <recommendedName>
        <fullName>Dynein axonemal heavy chain 12</fullName>
    </recommendedName>
    <alternativeName>
        <fullName>Axonemal beta dynein heavy chain 12</fullName>
    </alternativeName>
    <alternativeName>
        <fullName>Axonemal dynein heavy chain 12-like protein</fullName>
    </alternativeName>
    <alternativeName>
        <fullName>Axonemal dynein heavy chain 7-like protein</fullName>
    </alternativeName>
    <alternativeName>
        <fullName>Ciliary dynein heavy chain 12</fullName>
    </alternativeName>
</protein>
<comment type="function">
    <text evidence="1">Force generating protein of respiratory cilia. Produces force towards the minus ends of microtubules. Dynein has ATPase activity; the force-producing power stroke is thought to occur on release of ADP. Involved in sperm motility; implicated in sperm flagellar assembly (By similarity).</text>
</comment>
<comment type="pathway">
    <text>Protein modification; protein ubiquitination.</text>
</comment>
<comment type="subunit">
    <text>Consists of at least two heavy chains and a number of intermediate and light chains.</text>
</comment>
<comment type="subcellular location">
    <subcellularLocation>
        <location evidence="4">Cytoplasm</location>
        <location evidence="4">Cytoskeleton</location>
        <location evidence="4">Cilium axoneme</location>
    </subcellularLocation>
</comment>
<comment type="domain">
    <text evidence="1">Dynein heavy chains probably consist of an N-terminal stem (which binds cargo and interacts with other dynein components), and the head or motor domain. The motor contains six tandemly-linked AAA domains in the head, which form a ring. A stalk-like structure (formed by two of the coiled coil domains) protrudes between AAA 4 and AAA 5 and terminates in a microtubule-binding site. A seventh domain may also contribute to this ring; it is not clear whether the N-terminus or the C-terminus forms this extra domain. There are four well-conserved and two non-conserved ATPase sites, one per AAA domain. Probably only one of these (within AAA 1) actually hydrolyzes ATP, the others may serve a regulatory function (By similarity).</text>
</comment>
<comment type="similarity">
    <text evidence="4">Belongs to the dynein heavy chain family.</text>
</comment>
<comment type="caution">
    <text evidence="4">Was originally derived from a readthrough transcript including ASB14 and DNAH12.</text>
</comment>
<proteinExistence type="evidence at protein level"/>
<organism>
    <name type="scientific">Mus musculus</name>
    <name type="common">Mouse</name>
    <dbReference type="NCBI Taxonomy" id="10090"/>
    <lineage>
        <taxon>Eukaryota</taxon>
        <taxon>Metazoa</taxon>
        <taxon>Chordata</taxon>
        <taxon>Craniata</taxon>
        <taxon>Vertebrata</taxon>
        <taxon>Euteleostomi</taxon>
        <taxon>Mammalia</taxon>
        <taxon>Eutheria</taxon>
        <taxon>Euarchontoglires</taxon>
        <taxon>Glires</taxon>
        <taxon>Rodentia</taxon>
        <taxon>Myomorpha</taxon>
        <taxon>Muroidea</taxon>
        <taxon>Muridae</taxon>
        <taxon>Murinae</taxon>
        <taxon>Mus</taxon>
        <taxon>Mus</taxon>
    </lineage>
</organism>
<feature type="chain" id="PRO_0000066952" description="Dynein axonemal heavy chain 12">
    <location>
        <begin position="1"/>
        <end position="3086"/>
    </location>
</feature>
<feature type="region of interest" description="Stem" evidence="1">
    <location>
        <begin position="1"/>
        <end position="1212"/>
    </location>
</feature>
<feature type="region of interest" description="Disordered" evidence="3">
    <location>
        <begin position="745"/>
        <end position="766"/>
    </location>
</feature>
<feature type="region of interest" description="AAA 1" evidence="1">
    <location>
        <begin position="1213"/>
        <end position="1434"/>
    </location>
</feature>
<feature type="region of interest" description="AAA 2" evidence="1">
    <location>
        <begin position="1494"/>
        <end position="1634"/>
    </location>
</feature>
<feature type="region of interest" description="AAA 3" evidence="1">
    <location>
        <begin position="1847"/>
        <end position="2098"/>
    </location>
</feature>
<feature type="region of interest" description="AAA 4" evidence="1">
    <location>
        <begin position="2212"/>
        <end position="2654"/>
    </location>
</feature>
<feature type="region of interest" description="Stalk" evidence="1">
    <location>
        <begin position="2655"/>
        <end position="2789"/>
    </location>
</feature>
<feature type="region of interest" description="AAA 5" evidence="1">
    <location>
        <begin position="2868"/>
        <end position="3045"/>
    </location>
</feature>
<feature type="coiled-coil region" evidence="2">
    <location>
        <begin position="592"/>
        <end position="665"/>
    </location>
</feature>
<feature type="coiled-coil region" evidence="2">
    <location>
        <begin position="2847"/>
        <end position="2875"/>
    </location>
</feature>
<feature type="short sequence motif" description="GPAGTGKT motif">
    <location>
        <begin position="1251"/>
        <end position="1258"/>
    </location>
</feature>
<feature type="short sequence motif" description="CFDEFNR motif">
    <location>
        <begin position="1301"/>
        <end position="1307"/>
    </location>
</feature>
<feature type="binding site" evidence="2">
    <location>
        <begin position="1251"/>
        <end position="1258"/>
    </location>
    <ligand>
        <name>ATP</name>
        <dbReference type="ChEBI" id="CHEBI:30616"/>
    </ligand>
</feature>
<feature type="binding site" evidence="2">
    <location>
        <begin position="1532"/>
        <end position="1539"/>
    </location>
    <ligand>
        <name>ATP</name>
        <dbReference type="ChEBI" id="CHEBI:30616"/>
    </ligand>
</feature>
<feature type="binding site" evidence="2">
    <location>
        <begin position="1886"/>
        <end position="1893"/>
    </location>
    <ligand>
        <name>ATP</name>
        <dbReference type="ChEBI" id="CHEBI:30616"/>
    </ligand>
</feature>
<feature type="binding site" evidence="2">
    <location>
        <begin position="2251"/>
        <end position="2258"/>
    </location>
    <ligand>
        <name>ATP</name>
        <dbReference type="ChEBI" id="CHEBI:30616"/>
    </ligand>
</feature>
<evidence type="ECO:0000250" key="1"/>
<evidence type="ECO:0000255" key="2"/>
<evidence type="ECO:0000256" key="3">
    <source>
        <dbReference type="SAM" id="MobiDB-lite"/>
    </source>
</evidence>
<evidence type="ECO:0000305" key="4"/>
<reference key="1">
    <citation type="journal article" date="2009" name="PLoS Biol.">
        <title>Lineage-specific biology revealed by a finished genome assembly of the mouse.</title>
        <authorList>
            <person name="Church D.M."/>
            <person name="Goodstadt L."/>
            <person name="Hillier L.W."/>
            <person name="Zody M.C."/>
            <person name="Goldstein S."/>
            <person name="She X."/>
            <person name="Bult C.J."/>
            <person name="Agarwala R."/>
            <person name="Cherry J.L."/>
            <person name="DiCuccio M."/>
            <person name="Hlavina W."/>
            <person name="Kapustin Y."/>
            <person name="Meric P."/>
            <person name="Maglott D."/>
            <person name="Birtle Z."/>
            <person name="Marques A.C."/>
            <person name="Graves T."/>
            <person name="Zhou S."/>
            <person name="Teague B."/>
            <person name="Potamousis K."/>
            <person name="Churas C."/>
            <person name="Place M."/>
            <person name="Herschleb J."/>
            <person name="Runnheim R."/>
            <person name="Forrest D."/>
            <person name="Amos-Landgraf J."/>
            <person name="Schwartz D.C."/>
            <person name="Cheng Z."/>
            <person name="Lindblad-Toh K."/>
            <person name="Eichler E.E."/>
            <person name="Ponting C.P."/>
        </authorList>
    </citation>
    <scope>NUCLEOTIDE SEQUENCE [LARGE SCALE GENOMIC DNA]</scope>
    <source>
        <strain>C57BL/6J</strain>
    </source>
</reference>
<reference key="2">
    <citation type="journal article" date="2005" name="Science">
        <title>The transcriptional landscape of the mammalian genome.</title>
        <authorList>
            <person name="Carninci P."/>
            <person name="Kasukawa T."/>
            <person name="Katayama S."/>
            <person name="Gough J."/>
            <person name="Frith M.C."/>
            <person name="Maeda N."/>
            <person name="Oyama R."/>
            <person name="Ravasi T."/>
            <person name="Lenhard B."/>
            <person name="Wells C."/>
            <person name="Kodzius R."/>
            <person name="Shimokawa K."/>
            <person name="Bajic V.B."/>
            <person name="Brenner S.E."/>
            <person name="Batalov S."/>
            <person name="Forrest A.R."/>
            <person name="Zavolan M."/>
            <person name="Davis M.J."/>
            <person name="Wilming L.G."/>
            <person name="Aidinis V."/>
            <person name="Allen J.E."/>
            <person name="Ambesi-Impiombato A."/>
            <person name="Apweiler R."/>
            <person name="Aturaliya R.N."/>
            <person name="Bailey T.L."/>
            <person name="Bansal M."/>
            <person name="Baxter L."/>
            <person name="Beisel K.W."/>
            <person name="Bersano T."/>
            <person name="Bono H."/>
            <person name="Chalk A.M."/>
            <person name="Chiu K.P."/>
            <person name="Choudhary V."/>
            <person name="Christoffels A."/>
            <person name="Clutterbuck D.R."/>
            <person name="Crowe M.L."/>
            <person name="Dalla E."/>
            <person name="Dalrymple B.P."/>
            <person name="de Bono B."/>
            <person name="Della Gatta G."/>
            <person name="di Bernardo D."/>
            <person name="Down T."/>
            <person name="Engstrom P."/>
            <person name="Fagiolini M."/>
            <person name="Faulkner G."/>
            <person name="Fletcher C.F."/>
            <person name="Fukushima T."/>
            <person name="Furuno M."/>
            <person name="Futaki S."/>
            <person name="Gariboldi M."/>
            <person name="Georgii-Hemming P."/>
            <person name="Gingeras T.R."/>
            <person name="Gojobori T."/>
            <person name="Green R.E."/>
            <person name="Gustincich S."/>
            <person name="Harbers M."/>
            <person name="Hayashi Y."/>
            <person name="Hensch T.K."/>
            <person name="Hirokawa N."/>
            <person name="Hill D."/>
            <person name="Huminiecki L."/>
            <person name="Iacono M."/>
            <person name="Ikeo K."/>
            <person name="Iwama A."/>
            <person name="Ishikawa T."/>
            <person name="Jakt M."/>
            <person name="Kanapin A."/>
            <person name="Katoh M."/>
            <person name="Kawasawa Y."/>
            <person name="Kelso J."/>
            <person name="Kitamura H."/>
            <person name="Kitano H."/>
            <person name="Kollias G."/>
            <person name="Krishnan S.P."/>
            <person name="Kruger A."/>
            <person name="Kummerfeld S.K."/>
            <person name="Kurochkin I.V."/>
            <person name="Lareau L.F."/>
            <person name="Lazarevic D."/>
            <person name="Lipovich L."/>
            <person name="Liu J."/>
            <person name="Liuni S."/>
            <person name="McWilliam S."/>
            <person name="Madan Babu M."/>
            <person name="Madera M."/>
            <person name="Marchionni L."/>
            <person name="Matsuda H."/>
            <person name="Matsuzawa S."/>
            <person name="Miki H."/>
            <person name="Mignone F."/>
            <person name="Miyake S."/>
            <person name="Morris K."/>
            <person name="Mottagui-Tabar S."/>
            <person name="Mulder N."/>
            <person name="Nakano N."/>
            <person name="Nakauchi H."/>
            <person name="Ng P."/>
            <person name="Nilsson R."/>
            <person name="Nishiguchi S."/>
            <person name="Nishikawa S."/>
            <person name="Nori F."/>
            <person name="Ohara O."/>
            <person name="Okazaki Y."/>
            <person name="Orlando V."/>
            <person name="Pang K.C."/>
            <person name="Pavan W.J."/>
            <person name="Pavesi G."/>
            <person name="Pesole G."/>
            <person name="Petrovsky N."/>
            <person name="Piazza S."/>
            <person name="Reed J."/>
            <person name="Reid J.F."/>
            <person name="Ring B.Z."/>
            <person name="Ringwald M."/>
            <person name="Rost B."/>
            <person name="Ruan Y."/>
            <person name="Salzberg S.L."/>
            <person name="Sandelin A."/>
            <person name="Schneider C."/>
            <person name="Schoenbach C."/>
            <person name="Sekiguchi K."/>
            <person name="Semple C.A."/>
            <person name="Seno S."/>
            <person name="Sessa L."/>
            <person name="Sheng Y."/>
            <person name="Shibata Y."/>
            <person name="Shimada H."/>
            <person name="Shimada K."/>
            <person name="Silva D."/>
            <person name="Sinclair B."/>
            <person name="Sperling S."/>
            <person name="Stupka E."/>
            <person name="Sugiura K."/>
            <person name="Sultana R."/>
            <person name="Takenaka Y."/>
            <person name="Taki K."/>
            <person name="Tammoja K."/>
            <person name="Tan S.L."/>
            <person name="Tang S."/>
            <person name="Taylor M.S."/>
            <person name="Tegner J."/>
            <person name="Teichmann S.A."/>
            <person name="Ueda H.R."/>
            <person name="van Nimwegen E."/>
            <person name="Verardo R."/>
            <person name="Wei C.L."/>
            <person name="Yagi K."/>
            <person name="Yamanishi H."/>
            <person name="Zabarovsky E."/>
            <person name="Zhu S."/>
            <person name="Zimmer A."/>
            <person name="Hide W."/>
            <person name="Bult C."/>
            <person name="Grimmond S.M."/>
            <person name="Teasdale R.D."/>
            <person name="Liu E.T."/>
            <person name="Brusic V."/>
            <person name="Quackenbush J."/>
            <person name="Wahlestedt C."/>
            <person name="Mattick J.S."/>
            <person name="Hume D.A."/>
            <person name="Kai C."/>
            <person name="Sasaki D."/>
            <person name="Tomaru Y."/>
            <person name="Fukuda S."/>
            <person name="Kanamori-Katayama M."/>
            <person name="Suzuki M."/>
            <person name="Aoki J."/>
            <person name="Arakawa T."/>
            <person name="Iida J."/>
            <person name="Imamura K."/>
            <person name="Itoh M."/>
            <person name="Kato T."/>
            <person name="Kawaji H."/>
            <person name="Kawagashira N."/>
            <person name="Kawashima T."/>
            <person name="Kojima M."/>
            <person name="Kondo S."/>
            <person name="Konno H."/>
            <person name="Nakano K."/>
            <person name="Ninomiya N."/>
            <person name="Nishio T."/>
            <person name="Okada M."/>
            <person name="Plessy C."/>
            <person name="Shibata K."/>
            <person name="Shiraki T."/>
            <person name="Suzuki S."/>
            <person name="Tagami M."/>
            <person name="Waki K."/>
            <person name="Watahiki A."/>
            <person name="Okamura-Oho Y."/>
            <person name="Suzuki H."/>
            <person name="Kawai J."/>
            <person name="Hayashizaki Y."/>
        </authorList>
    </citation>
    <scope>NUCLEOTIDE SEQUENCE [LARGE SCALE MRNA] OF 1-739 AND 2541-3086</scope>
    <source>
        <strain>C57BL/6J</strain>
        <tissue>Testis</tissue>
    </source>
</reference>
<reference key="3">
    <citation type="submission" date="2009-01" db="UniProtKB">
        <authorList>
            <person name="Lubec G."/>
            <person name="Sunyer B."/>
            <person name="Chen W.-Q."/>
        </authorList>
    </citation>
    <scope>PROTEIN SEQUENCE OF 37-42</scope>
    <scope>IDENTIFICATION BY MASS SPECTROMETRY</scope>
    <source>
        <strain>OF1</strain>
        <tissue>Hippocampus</tissue>
    </source>
</reference>
<reference key="4">
    <citation type="journal article" date="2010" name="Cell">
        <title>A tissue-specific atlas of mouse protein phosphorylation and expression.</title>
        <authorList>
            <person name="Huttlin E.L."/>
            <person name="Jedrychowski M.P."/>
            <person name="Elias J.E."/>
            <person name="Goswami T."/>
            <person name="Rad R."/>
            <person name="Beausoleil S.A."/>
            <person name="Villen J."/>
            <person name="Haas W."/>
            <person name="Sowa M.E."/>
            <person name="Gygi S.P."/>
        </authorList>
    </citation>
    <scope>IDENTIFICATION BY MASS SPECTROMETRY [LARGE SCALE ANALYSIS]</scope>
    <source>
        <tissue>Testis</tissue>
    </source>
</reference>
<gene>
    <name type="primary">Dnah12</name>
    <name type="synonym">Dnah12l</name>
    <name type="synonym">Dnah7l</name>
    <name type="synonym">Dnahc12</name>
    <name type="synonym">Dnahc7l</name>
</gene>
<keyword id="KW-0067">ATP-binding</keyword>
<keyword id="KW-0966">Cell projection</keyword>
<keyword id="KW-0969">Cilium</keyword>
<keyword id="KW-0175">Coiled coil</keyword>
<keyword id="KW-0963">Cytoplasm</keyword>
<keyword id="KW-0206">Cytoskeleton</keyword>
<keyword id="KW-0903">Direct protein sequencing</keyword>
<keyword id="KW-0243">Dynein</keyword>
<keyword id="KW-0493">Microtubule</keyword>
<keyword id="KW-0505">Motor protein</keyword>
<keyword id="KW-0547">Nucleotide-binding</keyword>
<keyword id="KW-1185">Reference proteome</keyword>
<keyword id="KW-0677">Repeat</keyword>
<keyword id="KW-0833">Ubl conjugation pathway</keyword>
<name>DYH12_MOUSE</name>
<accession>Q3V0Q1</accession>
<accession>Q8BVT4</accession>
<accession>Q8VHS7</accession>